<proteinExistence type="inferred from homology"/>
<comment type="function">
    <text evidence="1">This is one of the proteins that bind and probably mediate the attachment of the 5S RNA into the large ribosomal subunit, where it forms part of the central protuberance. In the 70S ribosome it contacts protein S13 of the 30S subunit (bridge B1b), connecting the 2 subunits; this bridge is implicated in subunit movement. Contacts the P site tRNA; the 5S rRNA and some of its associated proteins might help stabilize positioning of ribosome-bound tRNAs.</text>
</comment>
<comment type="subunit">
    <text evidence="1">Part of the 50S ribosomal subunit; part of the 5S rRNA/L5/L18/L25 subcomplex. Contacts the 5S rRNA and the P site tRNA. Forms a bridge to the 30S subunit in the 70S ribosome.</text>
</comment>
<comment type="similarity">
    <text evidence="1">Belongs to the universal ribosomal protein uL5 family.</text>
</comment>
<dbReference type="EMBL" id="AE017333">
    <property type="protein sequence ID" value="AAU39119.1"/>
    <property type="molecule type" value="Genomic_DNA"/>
</dbReference>
<dbReference type="EMBL" id="CP000002">
    <property type="protein sequence ID" value="AAU21774.1"/>
    <property type="molecule type" value="Genomic_DNA"/>
</dbReference>
<dbReference type="RefSeq" id="WP_003178352.1">
    <property type="nucleotide sequence ID" value="NC_006322.1"/>
</dbReference>
<dbReference type="SMR" id="Q65P95"/>
<dbReference type="STRING" id="279010.BL01039"/>
<dbReference type="GeneID" id="92858891"/>
<dbReference type="KEGG" id="bld:BLi00145"/>
<dbReference type="KEGG" id="bli:BL01039"/>
<dbReference type="eggNOG" id="COG0094">
    <property type="taxonomic scope" value="Bacteria"/>
</dbReference>
<dbReference type="HOGENOM" id="CLU_061015_2_1_9"/>
<dbReference type="Proteomes" id="UP000000606">
    <property type="component" value="Chromosome"/>
</dbReference>
<dbReference type="GO" id="GO:1990904">
    <property type="term" value="C:ribonucleoprotein complex"/>
    <property type="evidence" value="ECO:0007669"/>
    <property type="project" value="UniProtKB-KW"/>
</dbReference>
<dbReference type="GO" id="GO:0005840">
    <property type="term" value="C:ribosome"/>
    <property type="evidence" value="ECO:0007669"/>
    <property type="project" value="UniProtKB-KW"/>
</dbReference>
<dbReference type="GO" id="GO:0019843">
    <property type="term" value="F:rRNA binding"/>
    <property type="evidence" value="ECO:0007669"/>
    <property type="project" value="UniProtKB-UniRule"/>
</dbReference>
<dbReference type="GO" id="GO:0003735">
    <property type="term" value="F:structural constituent of ribosome"/>
    <property type="evidence" value="ECO:0007669"/>
    <property type="project" value="InterPro"/>
</dbReference>
<dbReference type="GO" id="GO:0000049">
    <property type="term" value="F:tRNA binding"/>
    <property type="evidence" value="ECO:0007669"/>
    <property type="project" value="UniProtKB-UniRule"/>
</dbReference>
<dbReference type="GO" id="GO:0006412">
    <property type="term" value="P:translation"/>
    <property type="evidence" value="ECO:0007669"/>
    <property type="project" value="UniProtKB-UniRule"/>
</dbReference>
<dbReference type="FunFam" id="3.30.1440.10:FF:000001">
    <property type="entry name" value="50S ribosomal protein L5"/>
    <property type="match status" value="1"/>
</dbReference>
<dbReference type="Gene3D" id="3.30.1440.10">
    <property type="match status" value="1"/>
</dbReference>
<dbReference type="HAMAP" id="MF_01333_B">
    <property type="entry name" value="Ribosomal_uL5_B"/>
    <property type="match status" value="1"/>
</dbReference>
<dbReference type="InterPro" id="IPR002132">
    <property type="entry name" value="Ribosomal_uL5"/>
</dbReference>
<dbReference type="InterPro" id="IPR020930">
    <property type="entry name" value="Ribosomal_uL5_bac-type"/>
</dbReference>
<dbReference type="InterPro" id="IPR031309">
    <property type="entry name" value="Ribosomal_uL5_C"/>
</dbReference>
<dbReference type="InterPro" id="IPR020929">
    <property type="entry name" value="Ribosomal_uL5_CS"/>
</dbReference>
<dbReference type="InterPro" id="IPR022803">
    <property type="entry name" value="Ribosomal_uL5_dom_sf"/>
</dbReference>
<dbReference type="InterPro" id="IPR031310">
    <property type="entry name" value="Ribosomal_uL5_N"/>
</dbReference>
<dbReference type="NCBIfam" id="NF000585">
    <property type="entry name" value="PRK00010.1"/>
    <property type="match status" value="1"/>
</dbReference>
<dbReference type="PANTHER" id="PTHR11994">
    <property type="entry name" value="60S RIBOSOMAL PROTEIN L11-RELATED"/>
    <property type="match status" value="1"/>
</dbReference>
<dbReference type="Pfam" id="PF00281">
    <property type="entry name" value="Ribosomal_L5"/>
    <property type="match status" value="1"/>
</dbReference>
<dbReference type="Pfam" id="PF00673">
    <property type="entry name" value="Ribosomal_L5_C"/>
    <property type="match status" value="1"/>
</dbReference>
<dbReference type="PIRSF" id="PIRSF002161">
    <property type="entry name" value="Ribosomal_L5"/>
    <property type="match status" value="1"/>
</dbReference>
<dbReference type="SUPFAM" id="SSF55282">
    <property type="entry name" value="RL5-like"/>
    <property type="match status" value="1"/>
</dbReference>
<dbReference type="PROSITE" id="PS00358">
    <property type="entry name" value="RIBOSOMAL_L5"/>
    <property type="match status" value="1"/>
</dbReference>
<protein>
    <recommendedName>
        <fullName evidence="1">Large ribosomal subunit protein uL5</fullName>
    </recommendedName>
    <alternativeName>
        <fullName evidence="2">50S ribosomal protein L5</fullName>
    </alternativeName>
</protein>
<organism>
    <name type="scientific">Bacillus licheniformis (strain ATCC 14580 / DSM 13 / JCM 2505 / CCUG 7422 / NBRC 12200 / NCIMB 9375 / NCTC 10341 / NRRL NRS-1264 / Gibson 46)</name>
    <dbReference type="NCBI Taxonomy" id="279010"/>
    <lineage>
        <taxon>Bacteria</taxon>
        <taxon>Bacillati</taxon>
        <taxon>Bacillota</taxon>
        <taxon>Bacilli</taxon>
        <taxon>Bacillales</taxon>
        <taxon>Bacillaceae</taxon>
        <taxon>Bacillus</taxon>
    </lineage>
</organism>
<gene>
    <name evidence="1" type="primary">rplE</name>
    <name type="ordered locus">BLi00145</name>
    <name type="ordered locus">BL01039</name>
</gene>
<sequence>MNRLKEKYNKEITPALMKKFEYKSVMQVPKIEKIVINMGVGDAVQNAKAIDSAVEELTFIAGQKPVVTRAKKSIAGFRLREGMPIGAKVTLRGERMYDFLDKLISVSLPRVRDFRGISKKSFDGRGNYTLGIKEQLIFPEIDYDKVTKVRGMDIVIVTTANTDEEARELLTQLGMPFQK</sequence>
<name>RL5_BACLD</name>
<reference key="1">
    <citation type="journal article" date="2004" name="J. Mol. Microbiol. Biotechnol.">
        <title>The complete genome sequence of Bacillus licheniformis DSM13, an organism with great industrial potential.</title>
        <authorList>
            <person name="Veith B."/>
            <person name="Herzberg C."/>
            <person name="Steckel S."/>
            <person name="Feesche J."/>
            <person name="Maurer K.H."/>
            <person name="Ehrenreich P."/>
            <person name="Baeumer S."/>
            <person name="Henne A."/>
            <person name="Liesegang H."/>
            <person name="Merkl R."/>
            <person name="Ehrenreich A."/>
            <person name="Gottschalk G."/>
        </authorList>
    </citation>
    <scope>NUCLEOTIDE SEQUENCE [LARGE SCALE GENOMIC DNA]</scope>
    <source>
        <strain>ATCC 14580 / DSM 13 / JCM 2505 / CCUG 7422 / NBRC 12200 / NCIMB 9375 / NCTC 10341 / NRRL NRS-1264 / Gibson 46</strain>
    </source>
</reference>
<reference key="2">
    <citation type="journal article" date="2004" name="Genome Biol.">
        <title>Complete genome sequence of the industrial bacterium Bacillus licheniformis and comparisons with closely related Bacillus species.</title>
        <authorList>
            <person name="Rey M.W."/>
            <person name="Ramaiya P."/>
            <person name="Nelson B.A."/>
            <person name="Brody-Karpin S.D."/>
            <person name="Zaretsky E.J."/>
            <person name="Tang M."/>
            <person name="Lopez de Leon A."/>
            <person name="Xiang H."/>
            <person name="Gusti V."/>
            <person name="Clausen I.G."/>
            <person name="Olsen P.B."/>
            <person name="Rasmussen M.D."/>
            <person name="Andersen J.T."/>
            <person name="Joergensen P.L."/>
            <person name="Larsen T.S."/>
            <person name="Sorokin A."/>
            <person name="Bolotin A."/>
            <person name="Lapidus A."/>
            <person name="Galleron N."/>
            <person name="Ehrlich S.D."/>
            <person name="Berka R.M."/>
        </authorList>
    </citation>
    <scope>NUCLEOTIDE SEQUENCE [LARGE SCALE GENOMIC DNA]</scope>
    <source>
        <strain>ATCC 14580 / DSM 13 / JCM 2505 / CCUG 7422 / NBRC 12200 / NCIMB 9375 / NCTC 10341 / NRRL NRS-1264 / Gibson 46</strain>
    </source>
</reference>
<feature type="chain" id="PRO_0000242967" description="Large ribosomal subunit protein uL5">
    <location>
        <begin position="1"/>
        <end position="179"/>
    </location>
</feature>
<keyword id="KW-1185">Reference proteome</keyword>
<keyword id="KW-0687">Ribonucleoprotein</keyword>
<keyword id="KW-0689">Ribosomal protein</keyword>
<keyword id="KW-0694">RNA-binding</keyword>
<keyword id="KW-0699">rRNA-binding</keyword>
<keyword id="KW-0820">tRNA-binding</keyword>
<accession>Q65P95</accession>
<accession>Q62ZN4</accession>
<evidence type="ECO:0000255" key="1">
    <source>
        <dbReference type="HAMAP-Rule" id="MF_01333"/>
    </source>
</evidence>
<evidence type="ECO:0000305" key="2"/>